<name>HMDH2_SOLLC</name>
<organism>
    <name type="scientific">Solanum lycopersicum</name>
    <name type="common">Tomato</name>
    <name type="synonym">Lycopersicon esculentum</name>
    <dbReference type="NCBI Taxonomy" id="4081"/>
    <lineage>
        <taxon>Eukaryota</taxon>
        <taxon>Viridiplantae</taxon>
        <taxon>Streptophyta</taxon>
        <taxon>Embryophyta</taxon>
        <taxon>Tracheophyta</taxon>
        <taxon>Spermatophyta</taxon>
        <taxon>Magnoliopsida</taxon>
        <taxon>eudicotyledons</taxon>
        <taxon>Gunneridae</taxon>
        <taxon>Pentapetalae</taxon>
        <taxon>asterids</taxon>
        <taxon>lamiids</taxon>
        <taxon>Solanales</taxon>
        <taxon>Solanaceae</taxon>
        <taxon>Solanoideae</taxon>
        <taxon>Solaneae</taxon>
        <taxon>Solanum</taxon>
        <taxon>Solanum subgen. Lycopersicon</taxon>
    </lineage>
</organism>
<reference key="1">
    <citation type="journal article" date="1992" name="Plant Mol. Biol.">
        <title>Structure and nucleotide sequence of tomato HMG2 encoding 3-hydroxy-3-methyl-glutaryl coenzyme A reductase.</title>
        <authorList>
            <person name="Park H.S."/>
            <person name="Denbow C.J."/>
            <person name="Cramer C.L."/>
        </authorList>
    </citation>
    <scope>NUCLEOTIDE SEQUENCE [GENOMIC DNA]</scope>
    <source>
        <strain>cv. VFNT Cherry</strain>
    </source>
</reference>
<reference key="2">
    <citation type="journal article" date="1996" name="Plant Physiol.">
        <title>The promoter for tomato 3-hydroxy-3-methylglutaryl coenzyme A reductase gene 2 has unusual regulatory elements that direct high-level expression.</title>
        <authorList>
            <person name="Daraselia N.D."/>
            <person name="Tarchevskaya S."/>
            <person name="Narita J.O."/>
        </authorList>
    </citation>
    <scope>NUCLEOTIDE SEQUENCE [GENOMIC DNA]</scope>
</reference>
<feature type="chain" id="PRO_0000114443" description="3-hydroxy-3-methylglutaryl-coenzyme A reductase 2">
    <location>
        <begin position="1"/>
        <end position="602"/>
    </location>
</feature>
<feature type="transmembrane region" description="Helical" evidence="2">
    <location>
        <begin position="44"/>
        <end position="67"/>
    </location>
</feature>
<feature type="transmembrane region" description="Helical" evidence="2">
    <location>
        <begin position="95"/>
        <end position="115"/>
    </location>
</feature>
<feature type="region of interest" description="Linker" evidence="1">
    <location>
        <begin position="116"/>
        <end position="187"/>
    </location>
</feature>
<feature type="region of interest" description="Catalytic" evidence="1">
    <location>
        <begin position="188"/>
        <end position="602"/>
    </location>
</feature>
<feature type="active site" description="Charge relay system" evidence="1">
    <location>
        <position position="281"/>
    </location>
</feature>
<feature type="active site" description="Charge relay system" evidence="1">
    <location>
        <position position="413"/>
    </location>
</feature>
<feature type="active site" description="Charge relay system" evidence="1">
    <location>
        <position position="489"/>
    </location>
</feature>
<feature type="active site" description="Proton donor" evidence="3">
    <location>
        <position position="587"/>
    </location>
</feature>
<feature type="glycosylation site" description="N-linked (GlcNAc...) asparagine" evidence="2">
    <location>
        <position position="124"/>
    </location>
</feature>
<feature type="glycosylation site" description="N-linked (GlcNAc...) asparagine" evidence="2">
    <location>
        <position position="345"/>
    </location>
</feature>
<feature type="glycosylation site" description="N-linked (GlcNAc...) asparagine" evidence="2">
    <location>
        <position position="458"/>
    </location>
</feature>
<feature type="glycosylation site" description="N-linked (GlcNAc...) asparagine" evidence="2">
    <location>
        <position position="591"/>
    </location>
</feature>
<feature type="sequence conflict" description="In Ref. 2; AAB62581." evidence="4" ref="2">
    <location>
        <position position="56"/>
    </location>
</feature>
<feature type="sequence conflict" description="In Ref. 2; AAB62581." evidence="4" ref="2">
    <original>G</original>
    <variation>E</variation>
    <location>
        <position position="186"/>
    </location>
</feature>
<feature type="sequence conflict" description="In Ref. 2; AAB62581." evidence="4" ref="2">
    <original>S</original>
    <variation>T</variation>
    <location>
        <position position="339"/>
    </location>
</feature>
<feature type="sequence conflict" description="In Ref. 2; AAB62581." evidence="4" ref="2">
    <original>LC</original>
    <variation>FV</variation>
    <location>
        <begin position="369"/>
        <end position="370"/>
    </location>
</feature>
<gene>
    <name type="primary">HMG2</name>
</gene>
<comment type="function">
    <text>Catalyzes the synthesis of mevalonate. The specific precursor of all isoprenoid compounds present in plants.</text>
</comment>
<comment type="catalytic activity">
    <reaction evidence="3">
        <text>(R)-mevalonate + 2 NADP(+) + CoA = (3S)-3-hydroxy-3-methylglutaryl-CoA + 2 NADPH + 2 H(+)</text>
        <dbReference type="Rhea" id="RHEA:15989"/>
        <dbReference type="ChEBI" id="CHEBI:15378"/>
        <dbReference type="ChEBI" id="CHEBI:36464"/>
        <dbReference type="ChEBI" id="CHEBI:43074"/>
        <dbReference type="ChEBI" id="CHEBI:57287"/>
        <dbReference type="ChEBI" id="CHEBI:57783"/>
        <dbReference type="ChEBI" id="CHEBI:58349"/>
        <dbReference type="EC" id="1.1.1.34"/>
    </reaction>
</comment>
<comment type="pathway">
    <text>Metabolic intermediate biosynthesis; (R)-mevalonate biosynthesis; (R)-mevalonate from acetyl-CoA: step 3/3.</text>
</comment>
<comment type="subcellular location">
    <subcellularLocation>
        <location>Endoplasmic reticulum membrane</location>
        <topology>Multi-pass membrane protein</topology>
    </subcellularLocation>
</comment>
<comment type="similarity">
    <text evidence="4">Belongs to the HMG-CoA reductase family.</text>
</comment>
<accession>P48022</accession>
<accession>O24028</accession>
<protein>
    <recommendedName>
        <fullName>3-hydroxy-3-methylglutaryl-coenzyme A reductase 2</fullName>
        <shortName>HMG-CoA reductase 2</shortName>
        <ecNumber>1.1.1.34</ecNumber>
    </recommendedName>
</protein>
<dbReference type="EC" id="1.1.1.34"/>
<dbReference type="EMBL" id="M63642">
    <property type="protein sequence ID" value="AAA34169.1"/>
    <property type="molecule type" value="Genomic_DNA"/>
</dbReference>
<dbReference type="EMBL" id="U68072">
    <property type="protein sequence ID" value="AAB62581.1"/>
    <property type="molecule type" value="Genomic_DNA"/>
</dbReference>
<dbReference type="PIR" id="S25316">
    <property type="entry name" value="S25316"/>
</dbReference>
<dbReference type="RefSeq" id="NP_001296119.1">
    <property type="nucleotide sequence ID" value="NM_001309190.1"/>
</dbReference>
<dbReference type="SMR" id="P48022"/>
<dbReference type="FunCoup" id="P48022">
    <property type="interactions" value="745"/>
</dbReference>
<dbReference type="STRING" id="4081.P48022"/>
<dbReference type="GlyCosmos" id="P48022">
    <property type="glycosylation" value="4 sites, No reported glycans"/>
</dbReference>
<dbReference type="PaxDb" id="4081-Solyc02g038740.2.1"/>
<dbReference type="GeneID" id="101265292"/>
<dbReference type="KEGG" id="sly:101265292"/>
<dbReference type="eggNOG" id="KOG2480">
    <property type="taxonomic scope" value="Eukaryota"/>
</dbReference>
<dbReference type="InParanoid" id="P48022"/>
<dbReference type="OrthoDB" id="310654at2759"/>
<dbReference type="UniPathway" id="UPA00058">
    <property type="reaction ID" value="UER00103"/>
</dbReference>
<dbReference type="Proteomes" id="UP000004994">
    <property type="component" value="Unplaced"/>
</dbReference>
<dbReference type="ExpressionAtlas" id="P48022">
    <property type="expression patterns" value="baseline and differential"/>
</dbReference>
<dbReference type="GO" id="GO:0005789">
    <property type="term" value="C:endoplasmic reticulum membrane"/>
    <property type="evidence" value="ECO:0000318"/>
    <property type="project" value="GO_Central"/>
</dbReference>
<dbReference type="GO" id="GO:0005778">
    <property type="term" value="C:peroxisomal membrane"/>
    <property type="evidence" value="ECO:0000318"/>
    <property type="project" value="GO_Central"/>
</dbReference>
<dbReference type="GO" id="GO:0004420">
    <property type="term" value="F:hydroxymethylglutaryl-CoA reductase (NADPH) activity"/>
    <property type="evidence" value="ECO:0000318"/>
    <property type="project" value="GO_Central"/>
</dbReference>
<dbReference type="GO" id="GO:0015936">
    <property type="term" value="P:coenzyme A metabolic process"/>
    <property type="evidence" value="ECO:0007669"/>
    <property type="project" value="InterPro"/>
</dbReference>
<dbReference type="GO" id="GO:0008299">
    <property type="term" value="P:isoprenoid biosynthetic process"/>
    <property type="evidence" value="ECO:0000318"/>
    <property type="project" value="GO_Central"/>
</dbReference>
<dbReference type="GO" id="GO:0016126">
    <property type="term" value="P:sterol biosynthetic process"/>
    <property type="evidence" value="ECO:0000318"/>
    <property type="project" value="GO_Central"/>
</dbReference>
<dbReference type="CDD" id="cd00643">
    <property type="entry name" value="HMG-CoA_reductase_classI"/>
    <property type="match status" value="1"/>
</dbReference>
<dbReference type="FunFam" id="1.10.3270.10:FF:000002">
    <property type="entry name" value="3-hydroxy-3-methylglutaryl coenzyme A reductase"/>
    <property type="match status" value="1"/>
</dbReference>
<dbReference type="FunFam" id="3.30.70.420:FF:000001">
    <property type="entry name" value="3-hydroxy-3-methylglutaryl coenzyme A reductase"/>
    <property type="match status" value="1"/>
</dbReference>
<dbReference type="FunFam" id="3.90.770.10:FF:000001">
    <property type="entry name" value="3-hydroxy-3-methylglutaryl coenzyme A reductase"/>
    <property type="match status" value="1"/>
</dbReference>
<dbReference type="Gene3D" id="3.90.770.10">
    <property type="entry name" value="3-hydroxy-3-methylglutaryl-coenzyme A Reductase, Chain A, domain 2"/>
    <property type="match status" value="1"/>
</dbReference>
<dbReference type="Gene3D" id="1.10.3270.10">
    <property type="entry name" value="HMGR, N-terminal domain"/>
    <property type="match status" value="1"/>
</dbReference>
<dbReference type="Gene3D" id="3.30.70.420">
    <property type="entry name" value="Hydroxymethylglutaryl-CoA reductase, class I/II, NAD/NADP-binding domain"/>
    <property type="match status" value="1"/>
</dbReference>
<dbReference type="InterPro" id="IPR002202">
    <property type="entry name" value="HMG_CoA_Rdtase"/>
</dbReference>
<dbReference type="InterPro" id="IPR023074">
    <property type="entry name" value="HMG_CoA_Rdtase_cat_sf"/>
</dbReference>
<dbReference type="InterPro" id="IPR023076">
    <property type="entry name" value="HMG_CoA_Rdtase_CS"/>
</dbReference>
<dbReference type="InterPro" id="IPR004554">
    <property type="entry name" value="HMG_CoA_Rdtase_eu_arc"/>
</dbReference>
<dbReference type="InterPro" id="IPR023282">
    <property type="entry name" value="HMG_CoA_Rdtase_N"/>
</dbReference>
<dbReference type="InterPro" id="IPR009023">
    <property type="entry name" value="HMG_CoA_Rdtase_NAD(P)-bd_sf"/>
</dbReference>
<dbReference type="InterPro" id="IPR009029">
    <property type="entry name" value="HMG_CoA_Rdtase_sub-bd_dom_sf"/>
</dbReference>
<dbReference type="NCBIfam" id="TIGR00533">
    <property type="entry name" value="HMG_CoA_R_NADP"/>
    <property type="match status" value="1"/>
</dbReference>
<dbReference type="PANTHER" id="PTHR10572">
    <property type="entry name" value="3-HYDROXY-3-METHYLGLUTARYL-COENZYME A REDUCTASE"/>
    <property type="match status" value="1"/>
</dbReference>
<dbReference type="PANTHER" id="PTHR10572:SF24">
    <property type="entry name" value="3-HYDROXY-3-METHYLGLUTARYL-COENZYME A REDUCTASE"/>
    <property type="match status" value="1"/>
</dbReference>
<dbReference type="Pfam" id="PF00368">
    <property type="entry name" value="HMG-CoA_red"/>
    <property type="match status" value="1"/>
</dbReference>
<dbReference type="PRINTS" id="PR00071">
    <property type="entry name" value="HMGCOARDTASE"/>
</dbReference>
<dbReference type="SUPFAM" id="SSF55035">
    <property type="entry name" value="NAD-binding domain of HMG-CoA reductase"/>
    <property type="match status" value="1"/>
</dbReference>
<dbReference type="SUPFAM" id="SSF56542">
    <property type="entry name" value="Substrate-binding domain of HMG-CoA reductase"/>
    <property type="match status" value="1"/>
</dbReference>
<dbReference type="PROSITE" id="PS00066">
    <property type="entry name" value="HMG_COA_REDUCTASE_1"/>
    <property type="match status" value="1"/>
</dbReference>
<dbReference type="PROSITE" id="PS00318">
    <property type="entry name" value="HMG_COA_REDUCTASE_2"/>
    <property type="match status" value="1"/>
</dbReference>
<dbReference type="PROSITE" id="PS01192">
    <property type="entry name" value="HMG_COA_REDUCTASE_3"/>
    <property type="match status" value="1"/>
</dbReference>
<dbReference type="PROSITE" id="PS50065">
    <property type="entry name" value="HMG_COA_REDUCTASE_4"/>
    <property type="match status" value="1"/>
</dbReference>
<proteinExistence type="inferred from homology"/>
<keyword id="KW-0256">Endoplasmic reticulum</keyword>
<keyword id="KW-0325">Glycoprotein</keyword>
<keyword id="KW-0414">Isoprene biosynthesis</keyword>
<keyword id="KW-0472">Membrane</keyword>
<keyword id="KW-0521">NADP</keyword>
<keyword id="KW-0560">Oxidoreductase</keyword>
<keyword id="KW-1185">Reference proteome</keyword>
<keyword id="KW-0812">Transmembrane</keyword>
<keyword id="KW-1133">Transmembrane helix</keyword>
<evidence type="ECO:0000250" key="1"/>
<evidence type="ECO:0000255" key="2"/>
<evidence type="ECO:0000255" key="3">
    <source>
        <dbReference type="PROSITE-ProRule" id="PRU10003"/>
    </source>
</evidence>
<evidence type="ECO:0000305" key="4"/>
<sequence>MDVRRRSEEPVYPSKVFAADEKPLKPHKKQQQQQEDKNTLLIDASDALPLPLYLTTNGLFFTMFFSVMYFLLSRWREKIRNSTPLHVVTLSELGAIVSLIASVIYLLGFFGIGFVQTFVSRGNNDSWDENDEEFLLKEDSRCGPATTLGCAVPAPPARQIAPMAPPQPSMSMVEKPAPLITSASSGEDEEIIKSVVQGKIPSYSLESKLGDCKRAASIRKEVMQRITGKSLEGLPLEGFNYESILGQCCEMPIGYVQIPVGIAGPLLLNGKEFSVPMATTEGCLVASTNRGCKAIYASGGATCILLRDGMTRAPCVRFGTAKRAAELKFFVEDPIKFESLANVFNQSSRFARLQRIQCAIAGKNLYMRLCCSTGDAMGMNMVSKGVQNVLDYLQNEYPDMDVIGISGNFCSDKKPAAVNWIEGRGKSVVCEAIITEEVVKKVLKTEVAALVELNMLKNLTGSAMAGALGGFNAHASNIVSAVFIATGQDPAQNIESSHCITMMEAVNDGKDLHISVTMPSIEVGTVGGGTQLASQSACLNLLGVKGANREAPGSNARLLATVVAGSVLAGELSLMSAISSGQLVNSHMKYNRSTKDVTKASS</sequence>